<proteinExistence type="inferred from homology"/>
<name>MDH_PARL1</name>
<protein>
    <recommendedName>
        <fullName evidence="1">Malate dehydrogenase</fullName>
        <ecNumber evidence="1">1.1.1.37</ecNumber>
    </recommendedName>
</protein>
<reference key="1">
    <citation type="journal article" date="2011" name="Stand. Genomic Sci.">
        <title>Complete genome sequence of Parvibaculum lavamentivorans type strain (DS-1(T)).</title>
        <authorList>
            <person name="Schleheck D."/>
            <person name="Weiss M."/>
            <person name="Pitluck S."/>
            <person name="Bruce D."/>
            <person name="Land M.L."/>
            <person name="Han S."/>
            <person name="Saunders E."/>
            <person name="Tapia R."/>
            <person name="Detter C."/>
            <person name="Brettin T."/>
            <person name="Han J."/>
            <person name="Woyke T."/>
            <person name="Goodwin L."/>
            <person name="Pennacchio L."/>
            <person name="Nolan M."/>
            <person name="Cook A.M."/>
            <person name="Kjelleberg S."/>
            <person name="Thomas T."/>
        </authorList>
    </citation>
    <scope>NUCLEOTIDE SEQUENCE [LARGE SCALE GENOMIC DNA]</scope>
    <source>
        <strain>DS-1 / DSM 13023 / NCIMB 13966</strain>
    </source>
</reference>
<keyword id="KW-0520">NAD</keyword>
<keyword id="KW-0560">Oxidoreductase</keyword>
<keyword id="KW-1185">Reference proteome</keyword>
<keyword id="KW-0816">Tricarboxylic acid cycle</keyword>
<organism>
    <name type="scientific">Parvibaculum lavamentivorans (strain DS-1 / DSM 13023 / NCIMB 13966)</name>
    <dbReference type="NCBI Taxonomy" id="402881"/>
    <lineage>
        <taxon>Bacteria</taxon>
        <taxon>Pseudomonadati</taxon>
        <taxon>Pseudomonadota</taxon>
        <taxon>Alphaproteobacteria</taxon>
        <taxon>Hyphomicrobiales</taxon>
        <taxon>Parvibaculaceae</taxon>
        <taxon>Parvibaculum</taxon>
    </lineage>
</organism>
<gene>
    <name evidence="1" type="primary">mdh</name>
    <name type="ordered locus">Plav_1450</name>
</gene>
<accession>A7HT37</accession>
<feature type="chain" id="PRO_1000072419" description="Malate dehydrogenase">
    <location>
        <begin position="1"/>
        <end position="333"/>
    </location>
</feature>
<feature type="active site" description="Proton acceptor" evidence="1">
    <location>
        <position position="176"/>
    </location>
</feature>
<feature type="binding site" evidence="1">
    <location>
        <begin position="10"/>
        <end position="15"/>
    </location>
    <ligand>
        <name>NAD(+)</name>
        <dbReference type="ChEBI" id="CHEBI:57540"/>
    </ligand>
</feature>
<feature type="binding site" evidence="1">
    <location>
        <position position="34"/>
    </location>
    <ligand>
        <name>NAD(+)</name>
        <dbReference type="ChEBI" id="CHEBI:57540"/>
    </ligand>
</feature>
<feature type="binding site" evidence="1">
    <location>
        <position position="83"/>
    </location>
    <ligand>
        <name>substrate</name>
    </ligand>
</feature>
<feature type="binding site" evidence="1">
    <location>
        <position position="89"/>
    </location>
    <ligand>
        <name>substrate</name>
    </ligand>
</feature>
<feature type="binding site" evidence="1">
    <location>
        <position position="96"/>
    </location>
    <ligand>
        <name>NAD(+)</name>
        <dbReference type="ChEBI" id="CHEBI:57540"/>
    </ligand>
</feature>
<feature type="binding site" evidence="1">
    <location>
        <begin position="119"/>
        <end position="121"/>
    </location>
    <ligand>
        <name>NAD(+)</name>
        <dbReference type="ChEBI" id="CHEBI:57540"/>
    </ligand>
</feature>
<feature type="binding site" evidence="1">
    <location>
        <position position="121"/>
    </location>
    <ligand>
        <name>substrate</name>
    </ligand>
</feature>
<feature type="binding site" evidence="1">
    <location>
        <position position="152"/>
    </location>
    <ligand>
        <name>substrate</name>
    </ligand>
</feature>
<comment type="function">
    <text evidence="1">Catalyzes the reversible oxidation of malate to oxaloacetate.</text>
</comment>
<comment type="catalytic activity">
    <reaction evidence="1">
        <text>(S)-malate + NAD(+) = oxaloacetate + NADH + H(+)</text>
        <dbReference type="Rhea" id="RHEA:21432"/>
        <dbReference type="ChEBI" id="CHEBI:15378"/>
        <dbReference type="ChEBI" id="CHEBI:15589"/>
        <dbReference type="ChEBI" id="CHEBI:16452"/>
        <dbReference type="ChEBI" id="CHEBI:57540"/>
        <dbReference type="ChEBI" id="CHEBI:57945"/>
        <dbReference type="EC" id="1.1.1.37"/>
    </reaction>
</comment>
<comment type="similarity">
    <text evidence="1">Belongs to the LDH/MDH superfamily. MDH type 3 family.</text>
</comment>
<sequence>MARKKIALIGGGQIGGTLALLAGLKELGDVVIFDIAEGLPQGKALDLAQTGPVEGYNTALSGANDYKGIKGADVVIVTAGVPRKPGMSRDDLLGINLKVMKQVGEGIAKYAPNAFVVCITNPLDAMVWALRQFSGLPHNKVVGMAGVLDSGRFRLFLAEEFGVSVEDVTAFVLGGHGDTMVPLPRYSTVAGIPLPDLVKMGWTTKEKLDKIIQRTRDGGAEIVGLLKTGSAFYAPAASGIQMAEAYLKDQKRVLPCAAYINGQYGVKDMYVGVPVVIGAGGVERIVEIDLNGSEKKQFMNSVNAVKGLVDACKKIDPAVAKGAAPAKKAAKKK</sequence>
<evidence type="ECO:0000255" key="1">
    <source>
        <dbReference type="HAMAP-Rule" id="MF_00487"/>
    </source>
</evidence>
<dbReference type="EC" id="1.1.1.37" evidence="1"/>
<dbReference type="EMBL" id="CP000774">
    <property type="protein sequence ID" value="ABS63070.1"/>
    <property type="molecule type" value="Genomic_DNA"/>
</dbReference>
<dbReference type="RefSeq" id="WP_012110350.1">
    <property type="nucleotide sequence ID" value="NC_009719.1"/>
</dbReference>
<dbReference type="SMR" id="A7HT37"/>
<dbReference type="STRING" id="402881.Plav_1450"/>
<dbReference type="KEGG" id="pla:Plav_1450"/>
<dbReference type="eggNOG" id="COG0039">
    <property type="taxonomic scope" value="Bacteria"/>
</dbReference>
<dbReference type="HOGENOM" id="CLU_045401_2_1_5"/>
<dbReference type="OrthoDB" id="9802969at2"/>
<dbReference type="Proteomes" id="UP000006377">
    <property type="component" value="Chromosome"/>
</dbReference>
<dbReference type="GO" id="GO:0004459">
    <property type="term" value="F:L-lactate dehydrogenase activity"/>
    <property type="evidence" value="ECO:0007669"/>
    <property type="project" value="TreeGrafter"/>
</dbReference>
<dbReference type="GO" id="GO:0030060">
    <property type="term" value="F:L-malate dehydrogenase (NAD+) activity"/>
    <property type="evidence" value="ECO:0007669"/>
    <property type="project" value="UniProtKB-UniRule"/>
</dbReference>
<dbReference type="GO" id="GO:0006089">
    <property type="term" value="P:lactate metabolic process"/>
    <property type="evidence" value="ECO:0007669"/>
    <property type="project" value="TreeGrafter"/>
</dbReference>
<dbReference type="GO" id="GO:0006099">
    <property type="term" value="P:tricarboxylic acid cycle"/>
    <property type="evidence" value="ECO:0007669"/>
    <property type="project" value="UniProtKB-UniRule"/>
</dbReference>
<dbReference type="CDD" id="cd01339">
    <property type="entry name" value="LDH-like_MDH"/>
    <property type="match status" value="1"/>
</dbReference>
<dbReference type="FunFam" id="3.40.50.720:FF:000018">
    <property type="entry name" value="Malate dehydrogenase"/>
    <property type="match status" value="1"/>
</dbReference>
<dbReference type="FunFam" id="3.90.110.10:FF:000004">
    <property type="entry name" value="Malate dehydrogenase"/>
    <property type="match status" value="1"/>
</dbReference>
<dbReference type="Gene3D" id="3.90.110.10">
    <property type="entry name" value="Lactate dehydrogenase/glycoside hydrolase, family 4, C-terminal"/>
    <property type="match status" value="1"/>
</dbReference>
<dbReference type="Gene3D" id="3.40.50.720">
    <property type="entry name" value="NAD(P)-binding Rossmann-like Domain"/>
    <property type="match status" value="1"/>
</dbReference>
<dbReference type="HAMAP" id="MF_00487">
    <property type="entry name" value="Malate_dehydrog_3"/>
    <property type="match status" value="1"/>
</dbReference>
<dbReference type="InterPro" id="IPR001557">
    <property type="entry name" value="L-lactate/malate_DH"/>
</dbReference>
<dbReference type="InterPro" id="IPR022383">
    <property type="entry name" value="Lactate/malate_DH_C"/>
</dbReference>
<dbReference type="InterPro" id="IPR001236">
    <property type="entry name" value="Lactate/malate_DH_N"/>
</dbReference>
<dbReference type="InterPro" id="IPR015955">
    <property type="entry name" value="Lactate_DH/Glyco_Ohase_4_C"/>
</dbReference>
<dbReference type="InterPro" id="IPR011275">
    <property type="entry name" value="Malate_DH_type3"/>
</dbReference>
<dbReference type="InterPro" id="IPR036291">
    <property type="entry name" value="NAD(P)-bd_dom_sf"/>
</dbReference>
<dbReference type="NCBIfam" id="TIGR01763">
    <property type="entry name" value="MalateDH_bact"/>
    <property type="match status" value="1"/>
</dbReference>
<dbReference type="NCBIfam" id="NF004863">
    <property type="entry name" value="PRK06223.1"/>
    <property type="match status" value="1"/>
</dbReference>
<dbReference type="PANTHER" id="PTHR43128">
    <property type="entry name" value="L-2-HYDROXYCARBOXYLATE DEHYDROGENASE (NAD(P)(+))"/>
    <property type="match status" value="1"/>
</dbReference>
<dbReference type="PANTHER" id="PTHR43128:SF16">
    <property type="entry name" value="L-LACTATE DEHYDROGENASE"/>
    <property type="match status" value="1"/>
</dbReference>
<dbReference type="Pfam" id="PF02866">
    <property type="entry name" value="Ldh_1_C"/>
    <property type="match status" value="1"/>
</dbReference>
<dbReference type="Pfam" id="PF00056">
    <property type="entry name" value="Ldh_1_N"/>
    <property type="match status" value="1"/>
</dbReference>
<dbReference type="PIRSF" id="PIRSF000102">
    <property type="entry name" value="Lac_mal_DH"/>
    <property type="match status" value="1"/>
</dbReference>
<dbReference type="PRINTS" id="PR00086">
    <property type="entry name" value="LLDHDRGNASE"/>
</dbReference>
<dbReference type="SUPFAM" id="SSF56327">
    <property type="entry name" value="LDH C-terminal domain-like"/>
    <property type="match status" value="1"/>
</dbReference>
<dbReference type="SUPFAM" id="SSF51735">
    <property type="entry name" value="NAD(P)-binding Rossmann-fold domains"/>
    <property type="match status" value="1"/>
</dbReference>